<comment type="interaction">
    <interactant intactId="EBI-6660790">
        <id>Q96MY1</id>
    </interactant>
    <interactant intactId="EBI-10171858">
        <id>Q13363-2</id>
        <label>CTBP1</label>
    </interactant>
    <organismsDiffer>false</organismsDiffer>
    <experiments>3</experiments>
</comment>
<comment type="interaction">
    <interactant intactId="EBI-6660790">
        <id>Q96MY1</id>
    </interactant>
    <interactant intactId="EBI-741533">
        <id>P56545</id>
        <label>CTBP2</label>
    </interactant>
    <organismsDiffer>false</organismsDiffer>
    <experiments>4</experiments>
</comment>
<comment type="interaction">
    <interactant intactId="EBI-6660790">
        <id>Q96MY1</id>
    </interactant>
    <interactant intactId="EBI-10171902">
        <id>P56545-3</id>
        <label>CTBP2</label>
    </interactant>
    <organismsDiffer>false</organismsDiffer>
    <experiments>3</experiments>
</comment>
<comment type="alternative products">
    <event type="alternative splicing"/>
    <isoform>
        <id>Q96MY1-1</id>
        <name>1</name>
        <sequence type="displayed"/>
    </isoform>
    <isoform>
        <id>Q96MY1-2</id>
        <name>2</name>
        <sequence type="described" ref="VSP_014667 VSP_014668"/>
    </isoform>
</comment>
<feature type="chain" id="PRO_0000079456" description="Nucleolar protein 4-like">
    <location>
        <begin position="1"/>
        <end position="436"/>
    </location>
</feature>
<feature type="region of interest" description="Disordered" evidence="1">
    <location>
        <begin position="1"/>
        <end position="184"/>
    </location>
</feature>
<feature type="region of interest" description="Disordered" evidence="1">
    <location>
        <begin position="351"/>
        <end position="400"/>
    </location>
</feature>
<feature type="compositionally biased region" description="Low complexity" evidence="1">
    <location>
        <begin position="41"/>
        <end position="61"/>
    </location>
</feature>
<feature type="compositionally biased region" description="Acidic residues" evidence="1">
    <location>
        <begin position="160"/>
        <end position="169"/>
    </location>
</feature>
<feature type="compositionally biased region" description="Basic and acidic residues" evidence="1">
    <location>
        <begin position="170"/>
        <end position="184"/>
    </location>
</feature>
<feature type="compositionally biased region" description="Polar residues" evidence="1">
    <location>
        <begin position="351"/>
        <end position="366"/>
    </location>
</feature>
<feature type="compositionally biased region" description="Low complexity" evidence="1">
    <location>
        <begin position="375"/>
        <end position="396"/>
    </location>
</feature>
<feature type="modified residue" description="Phosphoserine" evidence="4 5">
    <location>
        <position position="130"/>
    </location>
</feature>
<feature type="modified residue" description="Phosphoserine" evidence="5">
    <location>
        <position position="295"/>
    </location>
</feature>
<feature type="splice variant" id="VSP_014667" description="In isoform 2." evidence="2">
    <original>TPTPSSTSTSRPVPTAQ</original>
    <variation>SALSGEPPTRRWGCSSV</variation>
    <location>
        <begin position="382"/>
        <end position="398"/>
    </location>
</feature>
<feature type="splice variant" id="VSP_014668" description="In isoform 2." evidence="2">
    <location>
        <begin position="399"/>
        <end position="436"/>
    </location>
</feature>
<feature type="sequence conflict" description="In Ref. 1; BAB71138." evidence="3" ref="1">
    <original>K</original>
    <variation>E</variation>
    <location>
        <position position="215"/>
    </location>
</feature>
<reference key="1">
    <citation type="journal article" date="2004" name="Nat. Genet.">
        <title>Complete sequencing and characterization of 21,243 full-length human cDNAs.</title>
        <authorList>
            <person name="Ota T."/>
            <person name="Suzuki Y."/>
            <person name="Nishikawa T."/>
            <person name="Otsuki T."/>
            <person name="Sugiyama T."/>
            <person name="Irie R."/>
            <person name="Wakamatsu A."/>
            <person name="Hayashi K."/>
            <person name="Sato H."/>
            <person name="Nagai K."/>
            <person name="Kimura K."/>
            <person name="Makita H."/>
            <person name="Sekine M."/>
            <person name="Obayashi M."/>
            <person name="Nishi T."/>
            <person name="Shibahara T."/>
            <person name="Tanaka T."/>
            <person name="Ishii S."/>
            <person name="Yamamoto J."/>
            <person name="Saito K."/>
            <person name="Kawai Y."/>
            <person name="Isono Y."/>
            <person name="Nakamura Y."/>
            <person name="Nagahari K."/>
            <person name="Murakami K."/>
            <person name="Yasuda T."/>
            <person name="Iwayanagi T."/>
            <person name="Wagatsuma M."/>
            <person name="Shiratori A."/>
            <person name="Sudo H."/>
            <person name="Hosoiri T."/>
            <person name="Kaku Y."/>
            <person name="Kodaira H."/>
            <person name="Kondo H."/>
            <person name="Sugawara M."/>
            <person name="Takahashi M."/>
            <person name="Kanda K."/>
            <person name="Yokoi T."/>
            <person name="Furuya T."/>
            <person name="Kikkawa E."/>
            <person name="Omura Y."/>
            <person name="Abe K."/>
            <person name="Kamihara K."/>
            <person name="Katsuta N."/>
            <person name="Sato K."/>
            <person name="Tanikawa M."/>
            <person name="Yamazaki M."/>
            <person name="Ninomiya K."/>
            <person name="Ishibashi T."/>
            <person name="Yamashita H."/>
            <person name="Murakawa K."/>
            <person name="Fujimori K."/>
            <person name="Tanai H."/>
            <person name="Kimata M."/>
            <person name="Watanabe M."/>
            <person name="Hiraoka S."/>
            <person name="Chiba Y."/>
            <person name="Ishida S."/>
            <person name="Ono Y."/>
            <person name="Takiguchi S."/>
            <person name="Watanabe S."/>
            <person name="Yosida M."/>
            <person name="Hotuta T."/>
            <person name="Kusano J."/>
            <person name="Kanehori K."/>
            <person name="Takahashi-Fujii A."/>
            <person name="Hara H."/>
            <person name="Tanase T.-O."/>
            <person name="Nomura Y."/>
            <person name="Togiya S."/>
            <person name="Komai F."/>
            <person name="Hara R."/>
            <person name="Takeuchi K."/>
            <person name="Arita M."/>
            <person name="Imose N."/>
            <person name="Musashino K."/>
            <person name="Yuuki H."/>
            <person name="Oshima A."/>
            <person name="Sasaki N."/>
            <person name="Aotsuka S."/>
            <person name="Yoshikawa Y."/>
            <person name="Matsunawa H."/>
            <person name="Ichihara T."/>
            <person name="Shiohata N."/>
            <person name="Sano S."/>
            <person name="Moriya S."/>
            <person name="Momiyama H."/>
            <person name="Satoh N."/>
            <person name="Takami S."/>
            <person name="Terashima Y."/>
            <person name="Suzuki O."/>
            <person name="Nakagawa S."/>
            <person name="Senoh A."/>
            <person name="Mizoguchi H."/>
            <person name="Goto Y."/>
            <person name="Shimizu F."/>
            <person name="Wakebe H."/>
            <person name="Hishigaki H."/>
            <person name="Watanabe T."/>
            <person name="Sugiyama A."/>
            <person name="Takemoto M."/>
            <person name="Kawakami B."/>
            <person name="Yamazaki M."/>
            <person name="Watanabe K."/>
            <person name="Kumagai A."/>
            <person name="Itakura S."/>
            <person name="Fukuzumi Y."/>
            <person name="Fujimori Y."/>
            <person name="Komiyama M."/>
            <person name="Tashiro H."/>
            <person name="Tanigami A."/>
            <person name="Fujiwara T."/>
            <person name="Ono T."/>
            <person name="Yamada K."/>
            <person name="Fujii Y."/>
            <person name="Ozaki K."/>
            <person name="Hirao M."/>
            <person name="Ohmori Y."/>
            <person name="Kawabata A."/>
            <person name="Hikiji T."/>
            <person name="Kobatake N."/>
            <person name="Inagaki H."/>
            <person name="Ikema Y."/>
            <person name="Okamoto S."/>
            <person name="Okitani R."/>
            <person name="Kawakami T."/>
            <person name="Noguchi S."/>
            <person name="Itoh T."/>
            <person name="Shigeta K."/>
            <person name="Senba T."/>
            <person name="Matsumura K."/>
            <person name="Nakajima Y."/>
            <person name="Mizuno T."/>
            <person name="Morinaga M."/>
            <person name="Sasaki M."/>
            <person name="Togashi T."/>
            <person name="Oyama M."/>
            <person name="Hata H."/>
            <person name="Watanabe M."/>
            <person name="Komatsu T."/>
            <person name="Mizushima-Sugano J."/>
            <person name="Satoh T."/>
            <person name="Shirai Y."/>
            <person name="Takahashi Y."/>
            <person name="Nakagawa K."/>
            <person name="Okumura K."/>
            <person name="Nagase T."/>
            <person name="Nomura N."/>
            <person name="Kikuchi H."/>
            <person name="Masuho Y."/>
            <person name="Yamashita R."/>
            <person name="Nakai K."/>
            <person name="Yada T."/>
            <person name="Nakamura Y."/>
            <person name="Ohara O."/>
            <person name="Isogai T."/>
            <person name="Sugano S."/>
        </authorList>
    </citation>
    <scope>NUCLEOTIDE SEQUENCE [LARGE SCALE MRNA] (ISOFORM 1)</scope>
    <source>
        <tissue>Neuron</tissue>
    </source>
</reference>
<reference key="2">
    <citation type="journal article" date="2001" name="Nature">
        <title>The DNA sequence and comparative analysis of human chromosome 20.</title>
        <authorList>
            <person name="Deloukas P."/>
            <person name="Matthews L.H."/>
            <person name="Ashurst J.L."/>
            <person name="Burton J."/>
            <person name="Gilbert J.G.R."/>
            <person name="Jones M."/>
            <person name="Stavrides G."/>
            <person name="Almeida J.P."/>
            <person name="Babbage A.K."/>
            <person name="Bagguley C.L."/>
            <person name="Bailey J."/>
            <person name="Barlow K.F."/>
            <person name="Bates K.N."/>
            <person name="Beard L.M."/>
            <person name="Beare D.M."/>
            <person name="Beasley O.P."/>
            <person name="Bird C.P."/>
            <person name="Blakey S.E."/>
            <person name="Bridgeman A.M."/>
            <person name="Brown A.J."/>
            <person name="Buck D."/>
            <person name="Burrill W.D."/>
            <person name="Butler A.P."/>
            <person name="Carder C."/>
            <person name="Carter N.P."/>
            <person name="Chapman J.C."/>
            <person name="Clamp M."/>
            <person name="Clark G."/>
            <person name="Clark L.N."/>
            <person name="Clark S.Y."/>
            <person name="Clee C.M."/>
            <person name="Clegg S."/>
            <person name="Cobley V.E."/>
            <person name="Collier R.E."/>
            <person name="Connor R.E."/>
            <person name="Corby N.R."/>
            <person name="Coulson A."/>
            <person name="Coville G.J."/>
            <person name="Deadman R."/>
            <person name="Dhami P.D."/>
            <person name="Dunn M."/>
            <person name="Ellington A.G."/>
            <person name="Frankland J.A."/>
            <person name="Fraser A."/>
            <person name="French L."/>
            <person name="Garner P."/>
            <person name="Grafham D.V."/>
            <person name="Griffiths C."/>
            <person name="Griffiths M.N.D."/>
            <person name="Gwilliam R."/>
            <person name="Hall R.E."/>
            <person name="Hammond S."/>
            <person name="Harley J.L."/>
            <person name="Heath P.D."/>
            <person name="Ho S."/>
            <person name="Holden J.L."/>
            <person name="Howden P.J."/>
            <person name="Huckle E."/>
            <person name="Hunt A.R."/>
            <person name="Hunt S.E."/>
            <person name="Jekosch K."/>
            <person name="Johnson C.M."/>
            <person name="Johnson D."/>
            <person name="Kay M.P."/>
            <person name="Kimberley A.M."/>
            <person name="King A."/>
            <person name="Knights A."/>
            <person name="Laird G.K."/>
            <person name="Lawlor S."/>
            <person name="Lehvaeslaiho M.H."/>
            <person name="Leversha M.A."/>
            <person name="Lloyd C."/>
            <person name="Lloyd D.M."/>
            <person name="Lovell J.D."/>
            <person name="Marsh V.L."/>
            <person name="Martin S.L."/>
            <person name="McConnachie L.J."/>
            <person name="McLay K."/>
            <person name="McMurray A.A."/>
            <person name="Milne S.A."/>
            <person name="Mistry D."/>
            <person name="Moore M.J.F."/>
            <person name="Mullikin J.C."/>
            <person name="Nickerson T."/>
            <person name="Oliver K."/>
            <person name="Parker A."/>
            <person name="Patel R."/>
            <person name="Pearce T.A.V."/>
            <person name="Peck A.I."/>
            <person name="Phillimore B.J.C.T."/>
            <person name="Prathalingam S.R."/>
            <person name="Plumb R.W."/>
            <person name="Ramsay H."/>
            <person name="Rice C.M."/>
            <person name="Ross M.T."/>
            <person name="Scott C.E."/>
            <person name="Sehra H.K."/>
            <person name="Shownkeen R."/>
            <person name="Sims S."/>
            <person name="Skuce C.D."/>
            <person name="Smith M.L."/>
            <person name="Soderlund C."/>
            <person name="Steward C.A."/>
            <person name="Sulston J.E."/>
            <person name="Swann R.M."/>
            <person name="Sycamore N."/>
            <person name="Taylor R."/>
            <person name="Tee L."/>
            <person name="Thomas D.W."/>
            <person name="Thorpe A."/>
            <person name="Tracey A."/>
            <person name="Tromans A.C."/>
            <person name="Vaudin M."/>
            <person name="Wall M."/>
            <person name="Wallis J.M."/>
            <person name="Whitehead S.L."/>
            <person name="Whittaker P."/>
            <person name="Willey D.L."/>
            <person name="Williams L."/>
            <person name="Williams S.A."/>
            <person name="Wilming L."/>
            <person name="Wray P.W."/>
            <person name="Hubbard T."/>
            <person name="Durbin R.M."/>
            <person name="Bentley D.R."/>
            <person name="Beck S."/>
            <person name="Rogers J."/>
        </authorList>
    </citation>
    <scope>NUCLEOTIDE SEQUENCE [LARGE SCALE GENOMIC DNA]</scope>
</reference>
<reference key="3">
    <citation type="journal article" date="2004" name="Genome Res.">
        <title>The status, quality, and expansion of the NIH full-length cDNA project: the Mammalian Gene Collection (MGC).</title>
        <authorList>
            <consortium name="The MGC Project Team"/>
        </authorList>
    </citation>
    <scope>NUCLEOTIDE SEQUENCE [LARGE SCALE MRNA] (ISOFORM 2)</scope>
    <source>
        <tissue>Skin</tissue>
    </source>
</reference>
<reference key="4">
    <citation type="journal article" date="2008" name="Proc. Natl. Acad. Sci. U.S.A.">
        <title>A quantitative atlas of mitotic phosphorylation.</title>
        <authorList>
            <person name="Dephoure N."/>
            <person name="Zhou C."/>
            <person name="Villen J."/>
            <person name="Beausoleil S.A."/>
            <person name="Bakalarski C.E."/>
            <person name="Elledge S.J."/>
            <person name="Gygi S.P."/>
        </authorList>
    </citation>
    <scope>PHOSPHORYLATION [LARGE SCALE ANALYSIS] AT SER-130</scope>
    <scope>IDENTIFICATION BY MASS SPECTROMETRY [LARGE SCALE ANALYSIS]</scope>
    <source>
        <tissue>Cervix carcinoma</tissue>
    </source>
</reference>
<reference key="5">
    <citation type="journal article" date="2013" name="J. Proteome Res.">
        <title>Toward a comprehensive characterization of a human cancer cell phosphoproteome.</title>
        <authorList>
            <person name="Zhou H."/>
            <person name="Di Palma S."/>
            <person name="Preisinger C."/>
            <person name="Peng M."/>
            <person name="Polat A.N."/>
            <person name="Heck A.J."/>
            <person name="Mohammed S."/>
        </authorList>
    </citation>
    <scope>PHOSPHORYLATION [LARGE SCALE ANALYSIS] AT SER-130 AND SER-295</scope>
    <scope>IDENTIFICATION BY MASS SPECTROMETRY [LARGE SCALE ANALYSIS]</scope>
    <source>
        <tissue>Cervix carcinoma</tissue>
        <tissue>Erythroleukemia</tissue>
    </source>
</reference>
<accession>Q96MY1</accession>
<accession>Q5JYB7</accession>
<accession>Q6P0Y4</accession>
<accession>Q9BR34</accession>
<accession>Q9NQF6</accession>
<keyword id="KW-0025">Alternative splicing</keyword>
<keyword id="KW-0597">Phosphoprotein</keyword>
<keyword id="KW-1267">Proteomics identification</keyword>
<keyword id="KW-1185">Reference proteome</keyword>
<gene>
    <name type="primary">NOL4L</name>
    <name type="synonym">C20orf112</name>
    <name type="synonym">C20orf113</name>
</gene>
<sequence length="436" mass="47215">MSDSTWMSADPHLASSLSPSQDERMRSPQNLHSQEDDDSSSESGSGNGSSTLNPSTSSSTQGDPAFPEMNGNGAVAPMDFTTAAEDQPINLCDKLPPATALGTASYPSDGCGADGLRSRVKYGVKTTPESPPYSSGSYDSIKTEVSGCPEDLTVGRAPTADDDDDDHDDHEDNDKMNDSEGMDPERLKAFNMFVRLFVDENLDRMVPISKQPKEKIQAIIESCSRQFPEFQERARKRIRTYLKSCRRMKKNGMEMTRPTPPHLTSAMAENILAAACESETRKAAKRMRLEIYQSSQDEPIALDKQHSRDSAAITHSTYSLPASSYSQDPVYANGGLNYSYRGYGALSSNLQPPASLQTGNHSNGPTDLSMKGGASTTSTTPTPTPSSTSTSRPVPTAQLSPTEISAVRQLIAGYRESAAFLLRSADELENLILQQN</sequence>
<proteinExistence type="evidence at protein level"/>
<evidence type="ECO:0000256" key="1">
    <source>
        <dbReference type="SAM" id="MobiDB-lite"/>
    </source>
</evidence>
<evidence type="ECO:0000303" key="2">
    <source>
    </source>
</evidence>
<evidence type="ECO:0000305" key="3"/>
<evidence type="ECO:0007744" key="4">
    <source>
    </source>
</evidence>
<evidence type="ECO:0007744" key="5">
    <source>
    </source>
</evidence>
<dbReference type="EMBL" id="AK056286">
    <property type="protein sequence ID" value="BAB71138.1"/>
    <property type="molecule type" value="mRNA"/>
</dbReference>
<dbReference type="EMBL" id="AL034550">
    <property type="status" value="NOT_ANNOTATED_CDS"/>
    <property type="molecule type" value="Genomic_DNA"/>
</dbReference>
<dbReference type="EMBL" id="BC065370">
    <property type="protein sequence ID" value="AAH65370.1"/>
    <property type="molecule type" value="mRNA"/>
</dbReference>
<dbReference type="CCDS" id="CCDS13202.1">
    <molecule id="Q96MY1-1"/>
</dbReference>
<dbReference type="RefSeq" id="NP_001243727.1">
    <property type="nucleotide sequence ID" value="NM_001256798.1"/>
</dbReference>
<dbReference type="RefSeq" id="NP_542183.2">
    <molecule id="Q96MY1-1"/>
    <property type="nucleotide sequence ID" value="NM_080616.6"/>
</dbReference>
<dbReference type="RefSeq" id="XP_005260345.1">
    <property type="nucleotide sequence ID" value="XM_005260288.2"/>
</dbReference>
<dbReference type="RefSeq" id="XP_005260346.1">
    <property type="nucleotide sequence ID" value="XM_005260289.4"/>
</dbReference>
<dbReference type="RefSeq" id="XP_016883158.1">
    <property type="nucleotide sequence ID" value="XM_017027669.1"/>
</dbReference>
<dbReference type="BioGRID" id="126651">
    <property type="interactions" value="14"/>
</dbReference>
<dbReference type="FunCoup" id="Q96MY1">
    <property type="interactions" value="1401"/>
</dbReference>
<dbReference type="IntAct" id="Q96MY1">
    <property type="interactions" value="7"/>
</dbReference>
<dbReference type="STRING" id="9606.ENSP00000483523"/>
<dbReference type="GlyCosmos" id="Q96MY1">
    <property type="glycosylation" value="1 site, 1 glycan"/>
</dbReference>
<dbReference type="GlyGen" id="Q96MY1">
    <property type="glycosylation" value="6 sites, 1 O-linked glycan (5 sites)"/>
</dbReference>
<dbReference type="iPTMnet" id="Q96MY1"/>
<dbReference type="PhosphoSitePlus" id="Q96MY1"/>
<dbReference type="BioMuta" id="NOL4L"/>
<dbReference type="DMDM" id="28212212"/>
<dbReference type="jPOST" id="Q96MY1"/>
<dbReference type="MassIVE" id="Q96MY1"/>
<dbReference type="PaxDb" id="9606-ENSP00000483523"/>
<dbReference type="PeptideAtlas" id="Q96MY1"/>
<dbReference type="ProteomicsDB" id="77430">
    <molecule id="Q96MY1-1"/>
</dbReference>
<dbReference type="ProteomicsDB" id="77431">
    <molecule id="Q96MY1-2"/>
</dbReference>
<dbReference type="Pumba" id="Q96MY1"/>
<dbReference type="Antibodypedia" id="49998">
    <property type="antibodies" value="127 antibodies from 17 providers"/>
</dbReference>
<dbReference type="DNASU" id="140688"/>
<dbReference type="Ensembl" id="ENST00000359676.9">
    <molecule id="Q96MY1-1"/>
    <property type="protein sequence ID" value="ENSP00000352704.5"/>
    <property type="gene ID" value="ENSG00000197183.15"/>
</dbReference>
<dbReference type="GeneID" id="140688"/>
<dbReference type="KEGG" id="hsa:140688"/>
<dbReference type="UCSC" id="uc002wxu.6">
    <molecule id="Q96MY1-1"/>
    <property type="organism name" value="human"/>
</dbReference>
<dbReference type="AGR" id="HGNC:16106"/>
<dbReference type="CTD" id="140688"/>
<dbReference type="DisGeNET" id="140688"/>
<dbReference type="GeneCards" id="NOL4L"/>
<dbReference type="HGNC" id="HGNC:16106">
    <property type="gene designation" value="NOL4L"/>
</dbReference>
<dbReference type="HPA" id="ENSG00000197183">
    <property type="expression patterns" value="Tissue enhanced (retina)"/>
</dbReference>
<dbReference type="MIM" id="618893">
    <property type="type" value="gene"/>
</dbReference>
<dbReference type="neXtProt" id="NX_Q96MY1"/>
<dbReference type="OpenTargets" id="ENSG00000197183"/>
<dbReference type="PharmGKB" id="PA25652"/>
<dbReference type="VEuPathDB" id="HostDB:ENSG00000197183"/>
<dbReference type="eggNOG" id="ENOG502QR3R">
    <property type="taxonomic scope" value="Eukaryota"/>
</dbReference>
<dbReference type="GeneTree" id="ENSGT00940000157729"/>
<dbReference type="HOGENOM" id="CLU_020587_2_0_1"/>
<dbReference type="InParanoid" id="Q96MY1"/>
<dbReference type="OMA" id="EFRDWCL"/>
<dbReference type="OrthoDB" id="10047222at2759"/>
<dbReference type="PAN-GO" id="Q96MY1">
    <property type="GO annotations" value="0 GO annotations based on evolutionary models"/>
</dbReference>
<dbReference type="PhylomeDB" id="Q96MY1"/>
<dbReference type="TreeFam" id="TF325594"/>
<dbReference type="PathwayCommons" id="Q96MY1"/>
<dbReference type="SignaLink" id="Q96MY1"/>
<dbReference type="BioGRID-ORCS" id="140688">
    <property type="hits" value="25 hits in 1150 CRISPR screens"/>
</dbReference>
<dbReference type="ChiTaRS" id="NOL4L">
    <property type="organism name" value="human"/>
</dbReference>
<dbReference type="GenomeRNAi" id="140688"/>
<dbReference type="Pharos" id="Q96MY1">
    <property type="development level" value="Tbio"/>
</dbReference>
<dbReference type="PRO" id="PR:Q96MY1"/>
<dbReference type="Proteomes" id="UP000005640">
    <property type="component" value="Chromosome 20"/>
</dbReference>
<dbReference type="RNAct" id="Q96MY1">
    <property type="molecule type" value="protein"/>
</dbReference>
<dbReference type="Bgee" id="ENSG00000197183">
    <property type="expression patterns" value="Expressed in ileal mucosa and 168 other cell types or tissues"/>
</dbReference>
<dbReference type="ExpressionAtlas" id="Q96MY1">
    <property type="expression patterns" value="baseline and differential"/>
</dbReference>
<dbReference type="GO" id="GO:0005829">
    <property type="term" value="C:cytosol"/>
    <property type="evidence" value="ECO:0000314"/>
    <property type="project" value="HPA"/>
</dbReference>
<dbReference type="GO" id="GO:0005654">
    <property type="term" value="C:nucleoplasm"/>
    <property type="evidence" value="ECO:0000314"/>
    <property type="project" value="HPA"/>
</dbReference>
<dbReference type="InterPro" id="IPR056549">
    <property type="entry name" value="HTH_NOL4"/>
</dbReference>
<dbReference type="InterPro" id="IPR039788">
    <property type="entry name" value="NOL4/NOL4L"/>
</dbReference>
<dbReference type="PANTHER" id="PTHR12449">
    <property type="entry name" value="DEATH DOMAIN-CONTAINING PROTEIN"/>
    <property type="match status" value="1"/>
</dbReference>
<dbReference type="PANTHER" id="PTHR12449:SF22">
    <property type="entry name" value="NUCLEOLAR PROTEIN 4"/>
    <property type="match status" value="1"/>
</dbReference>
<dbReference type="Pfam" id="PF23079">
    <property type="entry name" value="HTH_NOL4_2nd"/>
    <property type="match status" value="1"/>
</dbReference>
<protein>
    <recommendedName>
        <fullName>Nucleolar protein 4-like</fullName>
    </recommendedName>
</protein>
<name>NOL4L_HUMAN</name>
<organism>
    <name type="scientific">Homo sapiens</name>
    <name type="common">Human</name>
    <dbReference type="NCBI Taxonomy" id="9606"/>
    <lineage>
        <taxon>Eukaryota</taxon>
        <taxon>Metazoa</taxon>
        <taxon>Chordata</taxon>
        <taxon>Craniata</taxon>
        <taxon>Vertebrata</taxon>
        <taxon>Euteleostomi</taxon>
        <taxon>Mammalia</taxon>
        <taxon>Eutheria</taxon>
        <taxon>Euarchontoglires</taxon>
        <taxon>Primates</taxon>
        <taxon>Haplorrhini</taxon>
        <taxon>Catarrhini</taxon>
        <taxon>Hominidae</taxon>
        <taxon>Homo</taxon>
    </lineage>
</organism>